<gene>
    <name evidence="2" type="primary">betI</name>
    <name type="ordered locus">PSPPH_4768</name>
</gene>
<evidence type="ECO:0000250" key="1"/>
<evidence type="ECO:0000255" key="2">
    <source>
        <dbReference type="HAMAP-Rule" id="MF_00768"/>
    </source>
</evidence>
<keyword id="KW-0238">DNA-binding</keyword>
<keyword id="KW-0678">Repressor</keyword>
<keyword id="KW-0804">Transcription</keyword>
<keyword id="KW-0805">Transcription regulation</keyword>
<comment type="function">
    <text evidence="1">Repressor involved in the biosynthesis of the osmoprotectant glycine betaine. It represses transcription of the choline transporter BetT and the genes of BetAB involved in the synthesis of glycine betaine (By similarity).</text>
</comment>
<comment type="pathway">
    <text>Amine and polyamine biosynthesis; betaine biosynthesis via choline pathway [regulation].</text>
</comment>
<sequence>MPKVGMQPIRRQQLIQATLTAVDQVGMGDASIALIARLAGVSNGIISHYFQDKNGLIAATMRHLMNALIQNVRERRQALTEDSPRAHLQVIIEGNFDASQVSGPAMKTWLAFWATSMHHPSLHRLQRINDHRLYSNLCCQFRRTLPLEQARSAARGLAALIDGLWLRGALSGDAFDTEQAQRIAYEYMDFQLAKSAS</sequence>
<name>BETI_PSE14</name>
<proteinExistence type="inferred from homology"/>
<organism>
    <name type="scientific">Pseudomonas savastanoi pv. phaseolicola (strain 1448A / Race 6)</name>
    <name type="common">Pseudomonas syringae pv. phaseolicola (strain 1448A / Race 6)</name>
    <dbReference type="NCBI Taxonomy" id="264730"/>
    <lineage>
        <taxon>Bacteria</taxon>
        <taxon>Pseudomonadati</taxon>
        <taxon>Pseudomonadota</taxon>
        <taxon>Gammaproteobacteria</taxon>
        <taxon>Pseudomonadales</taxon>
        <taxon>Pseudomonadaceae</taxon>
        <taxon>Pseudomonas</taxon>
    </lineage>
</organism>
<feature type="chain" id="PRO_0000257740" description="HTH-type transcriptional regulator BetI">
    <location>
        <begin position="1"/>
        <end position="197"/>
    </location>
</feature>
<feature type="domain" description="HTH tetR-type" evidence="2">
    <location>
        <begin position="8"/>
        <end position="68"/>
    </location>
</feature>
<feature type="DNA-binding region" description="H-T-H motif" evidence="2">
    <location>
        <begin position="31"/>
        <end position="50"/>
    </location>
</feature>
<reference key="1">
    <citation type="journal article" date="2005" name="J. Bacteriol.">
        <title>Whole-genome sequence analysis of Pseudomonas syringae pv. phaseolicola 1448A reveals divergence among pathovars in genes involved in virulence and transposition.</title>
        <authorList>
            <person name="Joardar V."/>
            <person name="Lindeberg M."/>
            <person name="Jackson R.W."/>
            <person name="Selengut J."/>
            <person name="Dodson R."/>
            <person name="Brinkac L.M."/>
            <person name="Daugherty S.C."/>
            <person name="DeBoy R.T."/>
            <person name="Durkin A.S."/>
            <person name="Gwinn Giglio M."/>
            <person name="Madupu R."/>
            <person name="Nelson W.C."/>
            <person name="Rosovitz M.J."/>
            <person name="Sullivan S.A."/>
            <person name="Crabtree J."/>
            <person name="Creasy T."/>
            <person name="Davidsen T.M."/>
            <person name="Haft D.H."/>
            <person name="Zafar N."/>
            <person name="Zhou L."/>
            <person name="Halpin R."/>
            <person name="Holley T."/>
            <person name="Khouri H.M."/>
            <person name="Feldblyum T.V."/>
            <person name="White O."/>
            <person name="Fraser C.M."/>
            <person name="Chatterjee A.K."/>
            <person name="Cartinhour S."/>
            <person name="Schneider D."/>
            <person name="Mansfield J.W."/>
            <person name="Collmer A."/>
            <person name="Buell R."/>
        </authorList>
    </citation>
    <scope>NUCLEOTIDE SEQUENCE [LARGE SCALE GENOMIC DNA]</scope>
    <source>
        <strain>1448A / Race 6</strain>
    </source>
</reference>
<dbReference type="EMBL" id="CP000058">
    <property type="protein sequence ID" value="AAZ35807.1"/>
    <property type="molecule type" value="Genomic_DNA"/>
</dbReference>
<dbReference type="RefSeq" id="WP_002555619.1">
    <property type="nucleotide sequence ID" value="NC_005773.3"/>
</dbReference>
<dbReference type="SMR" id="Q48CM5"/>
<dbReference type="GeneID" id="65077265"/>
<dbReference type="KEGG" id="psp:PSPPH_4768"/>
<dbReference type="eggNOG" id="COG1309">
    <property type="taxonomic scope" value="Bacteria"/>
</dbReference>
<dbReference type="HOGENOM" id="CLU_069356_15_4_6"/>
<dbReference type="UniPathway" id="UPA00529"/>
<dbReference type="Proteomes" id="UP000000551">
    <property type="component" value="Chromosome"/>
</dbReference>
<dbReference type="GO" id="GO:0003700">
    <property type="term" value="F:DNA-binding transcription factor activity"/>
    <property type="evidence" value="ECO:0007669"/>
    <property type="project" value="UniProtKB-UniRule"/>
</dbReference>
<dbReference type="GO" id="GO:0000976">
    <property type="term" value="F:transcription cis-regulatory region binding"/>
    <property type="evidence" value="ECO:0007669"/>
    <property type="project" value="TreeGrafter"/>
</dbReference>
<dbReference type="GO" id="GO:0019285">
    <property type="term" value="P:glycine betaine biosynthetic process from choline"/>
    <property type="evidence" value="ECO:0007669"/>
    <property type="project" value="UniProtKB-UniRule"/>
</dbReference>
<dbReference type="GO" id="GO:0045892">
    <property type="term" value="P:negative regulation of DNA-templated transcription"/>
    <property type="evidence" value="ECO:0007669"/>
    <property type="project" value="UniProtKB-UniRule"/>
</dbReference>
<dbReference type="Gene3D" id="1.10.357.10">
    <property type="entry name" value="Tetracycline Repressor, domain 2"/>
    <property type="match status" value="1"/>
</dbReference>
<dbReference type="HAMAP" id="MF_00768">
    <property type="entry name" value="HTH_type_BetI"/>
    <property type="match status" value="1"/>
</dbReference>
<dbReference type="InterPro" id="IPR039538">
    <property type="entry name" value="BetI_C"/>
</dbReference>
<dbReference type="InterPro" id="IPR023772">
    <property type="entry name" value="DNA-bd_HTH_TetR-type_CS"/>
</dbReference>
<dbReference type="InterPro" id="IPR009057">
    <property type="entry name" value="Homeodomain-like_sf"/>
</dbReference>
<dbReference type="InterPro" id="IPR050109">
    <property type="entry name" value="HTH-type_TetR-like_transc_reg"/>
</dbReference>
<dbReference type="InterPro" id="IPR001647">
    <property type="entry name" value="HTH_TetR"/>
</dbReference>
<dbReference type="InterPro" id="IPR036271">
    <property type="entry name" value="Tet_transcr_reg_TetR-rel_C_sf"/>
</dbReference>
<dbReference type="InterPro" id="IPR017757">
    <property type="entry name" value="Tscrpt_rep_BetI"/>
</dbReference>
<dbReference type="NCBIfam" id="TIGR03384">
    <property type="entry name" value="betaine_BetI"/>
    <property type="match status" value="1"/>
</dbReference>
<dbReference type="NCBIfam" id="NF001978">
    <property type="entry name" value="PRK00767.1"/>
    <property type="match status" value="1"/>
</dbReference>
<dbReference type="PANTHER" id="PTHR30055:SF234">
    <property type="entry name" value="HTH-TYPE TRANSCRIPTIONAL REGULATOR BETI"/>
    <property type="match status" value="1"/>
</dbReference>
<dbReference type="PANTHER" id="PTHR30055">
    <property type="entry name" value="HTH-TYPE TRANSCRIPTIONAL REGULATOR RUTR"/>
    <property type="match status" value="1"/>
</dbReference>
<dbReference type="Pfam" id="PF13977">
    <property type="entry name" value="TetR_C_6"/>
    <property type="match status" value="1"/>
</dbReference>
<dbReference type="Pfam" id="PF00440">
    <property type="entry name" value="TetR_N"/>
    <property type="match status" value="1"/>
</dbReference>
<dbReference type="SUPFAM" id="SSF46689">
    <property type="entry name" value="Homeodomain-like"/>
    <property type="match status" value="1"/>
</dbReference>
<dbReference type="SUPFAM" id="SSF48498">
    <property type="entry name" value="Tetracyclin repressor-like, C-terminal domain"/>
    <property type="match status" value="1"/>
</dbReference>
<dbReference type="PROSITE" id="PS01081">
    <property type="entry name" value="HTH_TETR_1"/>
    <property type="match status" value="1"/>
</dbReference>
<dbReference type="PROSITE" id="PS50977">
    <property type="entry name" value="HTH_TETR_2"/>
    <property type="match status" value="1"/>
</dbReference>
<accession>Q48CM5</accession>
<protein>
    <recommendedName>
        <fullName evidence="2">HTH-type transcriptional regulator BetI</fullName>
    </recommendedName>
</protein>